<comment type="function">
    <text evidence="3">Involved in the hydrolysis of arabinan. Can hydrolyze (1,3)-alpha-, (1,2)-alpha-linked side group residues and non-reducing terminal L-arabinofuranose residues of debranched (1,5)-alpha-L-arabinan backbone. Also acts as a beta-D-xylosidase, releasing D-xylose from arabinoxylan and xylan.</text>
</comment>
<comment type="catalytic activity">
    <reaction evidence="3">
        <text>Hydrolysis of terminal non-reducing alpha-L-arabinofuranoside residues in alpha-L-arabinosides.</text>
        <dbReference type="EC" id="3.2.1.55"/>
    </reaction>
</comment>
<comment type="biophysicochemical properties">
    <kinetics>
        <KM evidence="3">0.26 mM for p-nitrophenyl-beta-D-xylopyranoside (at 37 degrees Celsius)</KM>
        <KM evidence="3">3.52 mM for p-nitrophenyl-alpha-L-arabinofuranoside (at 37 degrees Celsius)</KM>
        <KM evidence="3">5.5 mM for (1,5)-alpha-L-arabinobiose (at 37 degrees Celsius)</KM>
    </kinetics>
    <phDependence>
        <text evidence="3">Optimum pH is 4.7.</text>
    </phDependence>
    <temperatureDependence>
        <text evidence="3">Optimum temperature is 65 degrees Celsius.</text>
    </temperatureDependence>
</comment>
<comment type="subcellular location">
    <subcellularLocation>
        <location evidence="4">Secreted</location>
        <location evidence="4">Extracellular space</location>
        <location evidence="4">Extracellular matrix</location>
    </subcellularLocation>
</comment>
<comment type="tissue specificity">
    <text evidence="3">Expressed in flowers and siliques, in the early stage of seed formation and not at seed maturation. Detected exclusively in the endosperm of very young seeds when the embryo is at the globular stage.</text>
</comment>
<comment type="disruption phenotype">
    <text evidence="3">Reduced seeds size and delayed germination.</text>
</comment>
<comment type="similarity">
    <text evidence="4">Belongs to the glycosyl hydrolase 3 family.</text>
</comment>
<keyword id="KW-0903">Direct protein sequencing</keyword>
<keyword id="KW-0272">Extracellular matrix</keyword>
<keyword id="KW-0325">Glycoprotein</keyword>
<keyword id="KW-0326">Glycosidase</keyword>
<keyword id="KW-0378">Hydrolase</keyword>
<keyword id="KW-1185">Reference proteome</keyword>
<keyword id="KW-0964">Secreted</keyword>
<keyword id="KW-0732">Signal</keyword>
<gene>
    <name type="primary">BXL3</name>
    <name type="synonym">XYL3</name>
    <name type="ordered locus">At5g09730</name>
    <name type="ORF">F17I14.80</name>
</gene>
<proteinExistence type="evidence at protein level"/>
<feature type="signal peptide" evidence="3">
    <location>
        <begin position="1"/>
        <end position="23"/>
    </location>
</feature>
<feature type="chain" id="PRO_0000384058" description="Beta-D-xylosidase 3">
    <location>
        <begin position="24"/>
        <end position="773"/>
    </location>
</feature>
<feature type="active site" evidence="1">
    <location>
        <position position="298"/>
    </location>
</feature>
<feature type="glycosylation site" description="N-linked (GlcNAc...) asparagine" evidence="2">
    <location>
        <position position="131"/>
    </location>
</feature>
<feature type="glycosylation site" description="N-linked (GlcNAc...) asparagine" evidence="2">
    <location>
        <position position="349"/>
    </location>
</feature>
<feature type="glycosylation site" description="N-linked (GlcNAc...) asparagine" evidence="2">
    <location>
        <position position="432"/>
    </location>
</feature>
<feature type="glycosylation site" description="N-linked (GlcNAc...) asparagine" evidence="2">
    <location>
        <position position="770"/>
    </location>
</feature>
<feature type="sequence conflict" description="In Ref. 6; BAD94522." evidence="4" ref="6">
    <original>A</original>
    <variation>S</variation>
    <location>
        <position position="488"/>
    </location>
</feature>
<feature type="sequence conflict" description="In Ref. 6; BAD94522." evidence="4" ref="6">
    <original>A</original>
    <variation>P</variation>
    <location>
        <position position="569"/>
    </location>
</feature>
<sequence length="773" mass="83222">MASRNRALFSVSTLFLCFIVCISEQSNNQSSPVFACDVTGNPSLAGLRFCNAGLSIKARVTDLVGRLTLEEKIGFLTSKAIGVSRLGIPSYKWWSEALHGVSNVGGGSRFTGQVPGATSFPQVILTAASFNVSLFQAIGKVVSTEARAMYNVGSAGLTFWSPNVNIFRDPRWGRGQETPGEDPTLSSKYAVAYVKGLQETDGGDPNRLKVAACCKHYTAYDIDNWRNVNRLTFNAVVNQQDLADTFQPPFKSCVVDGHVASVMCSYNQVNGKPTCADPDLLSGVIRGQWQLNGYIVSDCDSVDVLFRKQHYAKTPEEAVAKSLLAGLDLNCDHFNGQHAMGAVKAGLVNETAIDKAISNNFATLMRLGFFDGDPKKQLYGGLGPKDVCTADNQELARDGARQGIVLLKNSAGSLPLSPSAIKTLAVIGPNANATETMIGNYHGVPCKYTTPLQGLAETVSSTYQLGCNVACVDADIGSAVDLAASADAVVLVVGADQSIEREGHDRVDLYLPGKQQELVTRVAMAARGPVVLVIMSGGGFDITFAKNDKKITSIMWVGYPGEAGGLAIADVIFGRHNPSGNLPMTWYPQSYVEKVPMSNMNMRPDKSKGYPGRSYRFYTGETVYAFADALTYTKFDHQLIKAPRLVSLSLDENHPCRSSECQSLDAIGPHCENAVEGGSDFEVHLNVKNTGDRAGSHTVFLFTTSPQVHGSPIKQLLGFEKIRLGKSEEAVVRFNVNVCKDLSVVDETGKRKIALGHHLLHVGSLKHSLNISV</sequence>
<accession>Q9LXD6</accession>
<accession>Q56WQ6</accession>
<evidence type="ECO:0000250" key="1"/>
<evidence type="ECO:0000255" key="2"/>
<evidence type="ECO:0000269" key="3">
    <source>
    </source>
</evidence>
<evidence type="ECO:0000305" key="4"/>
<name>BXL3_ARATH</name>
<protein>
    <recommendedName>
        <fullName>Beta-D-xylosidase 3</fullName>
        <shortName>AtBXL3</shortName>
        <ecNumber>3.2.1.-</ecNumber>
    </recommendedName>
    <alternativeName>
        <fullName>Alpha-L-arabinofuranosidase</fullName>
        <ecNumber>3.2.1.55</ecNumber>
    </alternativeName>
</protein>
<reference key="1">
    <citation type="journal article" date="1999" name="DNA Res.">
        <title>Structural analysis of Arabidopsis thaliana chromosome 5. IX. Sequence features of the regions of 1,011,550 bp covered by seventeen P1 and TAC clones.</title>
        <authorList>
            <person name="Kaneko T."/>
            <person name="Katoh T."/>
            <person name="Sato S."/>
            <person name="Nakamura Y."/>
            <person name="Asamizu E."/>
            <person name="Kotani H."/>
            <person name="Miyajima N."/>
            <person name="Tabata S."/>
        </authorList>
    </citation>
    <scope>NUCLEOTIDE SEQUENCE [LARGE SCALE GENOMIC DNA]</scope>
    <source>
        <strain>cv. Columbia</strain>
    </source>
</reference>
<reference key="2">
    <citation type="journal article" date="2000" name="Nature">
        <title>Sequence and analysis of chromosome 5 of the plant Arabidopsis thaliana.</title>
        <authorList>
            <person name="Tabata S."/>
            <person name="Kaneko T."/>
            <person name="Nakamura Y."/>
            <person name="Kotani H."/>
            <person name="Kato T."/>
            <person name="Asamizu E."/>
            <person name="Miyajima N."/>
            <person name="Sasamoto S."/>
            <person name="Kimura T."/>
            <person name="Hosouchi T."/>
            <person name="Kawashima K."/>
            <person name="Kohara M."/>
            <person name="Matsumoto M."/>
            <person name="Matsuno A."/>
            <person name="Muraki A."/>
            <person name="Nakayama S."/>
            <person name="Nakazaki N."/>
            <person name="Naruo K."/>
            <person name="Okumura S."/>
            <person name="Shinpo S."/>
            <person name="Takeuchi C."/>
            <person name="Wada T."/>
            <person name="Watanabe A."/>
            <person name="Yamada M."/>
            <person name="Yasuda M."/>
            <person name="Sato S."/>
            <person name="de la Bastide M."/>
            <person name="Huang E."/>
            <person name="Spiegel L."/>
            <person name="Gnoj L."/>
            <person name="O'Shaughnessy A."/>
            <person name="Preston R."/>
            <person name="Habermann K."/>
            <person name="Murray J."/>
            <person name="Johnson D."/>
            <person name="Rohlfing T."/>
            <person name="Nelson J."/>
            <person name="Stoneking T."/>
            <person name="Pepin K."/>
            <person name="Spieth J."/>
            <person name="Sekhon M."/>
            <person name="Armstrong J."/>
            <person name="Becker M."/>
            <person name="Belter E."/>
            <person name="Cordum H."/>
            <person name="Cordes M."/>
            <person name="Courtney L."/>
            <person name="Courtney W."/>
            <person name="Dante M."/>
            <person name="Du H."/>
            <person name="Edwards J."/>
            <person name="Fryman J."/>
            <person name="Haakensen B."/>
            <person name="Lamar E."/>
            <person name="Latreille P."/>
            <person name="Leonard S."/>
            <person name="Meyer R."/>
            <person name="Mulvaney E."/>
            <person name="Ozersky P."/>
            <person name="Riley A."/>
            <person name="Strowmatt C."/>
            <person name="Wagner-McPherson C."/>
            <person name="Wollam A."/>
            <person name="Yoakum M."/>
            <person name="Bell M."/>
            <person name="Dedhia N."/>
            <person name="Parnell L."/>
            <person name="Shah R."/>
            <person name="Rodriguez M."/>
            <person name="Hoon See L."/>
            <person name="Vil D."/>
            <person name="Baker J."/>
            <person name="Kirchoff K."/>
            <person name="Toth K."/>
            <person name="King L."/>
            <person name="Bahret A."/>
            <person name="Miller B."/>
            <person name="Marra M.A."/>
            <person name="Martienssen R."/>
            <person name="McCombie W.R."/>
            <person name="Wilson R.K."/>
            <person name="Murphy G."/>
            <person name="Bancroft I."/>
            <person name="Volckaert G."/>
            <person name="Wambutt R."/>
            <person name="Duesterhoeft A."/>
            <person name="Stiekema W."/>
            <person name="Pohl T."/>
            <person name="Entian K.-D."/>
            <person name="Terryn N."/>
            <person name="Hartley N."/>
            <person name="Bent E."/>
            <person name="Johnson S."/>
            <person name="Langham S.-A."/>
            <person name="McCullagh B."/>
            <person name="Robben J."/>
            <person name="Grymonprez B."/>
            <person name="Zimmermann W."/>
            <person name="Ramsperger U."/>
            <person name="Wedler H."/>
            <person name="Balke K."/>
            <person name="Wedler E."/>
            <person name="Peters S."/>
            <person name="van Staveren M."/>
            <person name="Dirkse W."/>
            <person name="Mooijman P."/>
            <person name="Klein Lankhorst R."/>
            <person name="Weitzenegger T."/>
            <person name="Bothe G."/>
            <person name="Rose M."/>
            <person name="Hauf J."/>
            <person name="Berneiser S."/>
            <person name="Hempel S."/>
            <person name="Feldpausch M."/>
            <person name="Lamberth S."/>
            <person name="Villarroel R."/>
            <person name="Gielen J."/>
            <person name="Ardiles W."/>
            <person name="Bents O."/>
            <person name="Lemcke K."/>
            <person name="Kolesov G."/>
            <person name="Mayer K.F.X."/>
            <person name="Rudd S."/>
            <person name="Schoof H."/>
            <person name="Schueller C."/>
            <person name="Zaccaria P."/>
            <person name="Mewes H.-W."/>
            <person name="Bevan M."/>
            <person name="Fransz P.F."/>
        </authorList>
    </citation>
    <scope>NUCLEOTIDE SEQUENCE [LARGE SCALE GENOMIC DNA]</scope>
    <source>
        <strain>cv. Columbia</strain>
    </source>
</reference>
<reference key="3">
    <citation type="journal article" date="2017" name="Plant J.">
        <title>Araport11: a complete reannotation of the Arabidopsis thaliana reference genome.</title>
        <authorList>
            <person name="Cheng C.Y."/>
            <person name="Krishnakumar V."/>
            <person name="Chan A.P."/>
            <person name="Thibaud-Nissen F."/>
            <person name="Schobel S."/>
            <person name="Town C.D."/>
        </authorList>
    </citation>
    <scope>GENOME REANNOTATION</scope>
    <source>
        <strain>cv. Columbia</strain>
    </source>
</reference>
<reference key="4">
    <citation type="journal article" date="2003" name="Science">
        <title>Empirical analysis of transcriptional activity in the Arabidopsis genome.</title>
        <authorList>
            <person name="Yamada K."/>
            <person name="Lim J."/>
            <person name="Dale J.M."/>
            <person name="Chen H."/>
            <person name="Shinn P."/>
            <person name="Palm C.J."/>
            <person name="Southwick A.M."/>
            <person name="Wu H.C."/>
            <person name="Kim C.J."/>
            <person name="Nguyen M."/>
            <person name="Pham P.K."/>
            <person name="Cheuk R.F."/>
            <person name="Karlin-Newmann G."/>
            <person name="Liu S.X."/>
            <person name="Lam B."/>
            <person name="Sakano H."/>
            <person name="Wu T."/>
            <person name="Yu G."/>
            <person name="Miranda M."/>
            <person name="Quach H.L."/>
            <person name="Tripp M."/>
            <person name="Chang C.H."/>
            <person name="Lee J.M."/>
            <person name="Toriumi M.J."/>
            <person name="Chan M.M."/>
            <person name="Tang C.C."/>
            <person name="Onodera C.S."/>
            <person name="Deng J.M."/>
            <person name="Akiyama K."/>
            <person name="Ansari Y."/>
            <person name="Arakawa T."/>
            <person name="Banh J."/>
            <person name="Banno F."/>
            <person name="Bowser L."/>
            <person name="Brooks S.Y."/>
            <person name="Carninci P."/>
            <person name="Chao Q."/>
            <person name="Choy N."/>
            <person name="Enju A."/>
            <person name="Goldsmith A.D."/>
            <person name="Gurjal M."/>
            <person name="Hansen N.F."/>
            <person name="Hayashizaki Y."/>
            <person name="Johnson-Hopson C."/>
            <person name="Hsuan V.W."/>
            <person name="Iida K."/>
            <person name="Karnes M."/>
            <person name="Khan S."/>
            <person name="Koesema E."/>
            <person name="Ishida J."/>
            <person name="Jiang P.X."/>
            <person name="Jones T."/>
            <person name="Kawai J."/>
            <person name="Kamiya A."/>
            <person name="Meyers C."/>
            <person name="Nakajima M."/>
            <person name="Narusaka M."/>
            <person name="Seki M."/>
            <person name="Sakurai T."/>
            <person name="Satou M."/>
            <person name="Tamse R."/>
            <person name="Vaysberg M."/>
            <person name="Wallender E.K."/>
            <person name="Wong C."/>
            <person name="Yamamura Y."/>
            <person name="Yuan S."/>
            <person name="Shinozaki K."/>
            <person name="Davis R.W."/>
            <person name="Theologis A."/>
            <person name="Ecker J.R."/>
        </authorList>
    </citation>
    <scope>NUCLEOTIDE SEQUENCE [LARGE SCALE MRNA]</scope>
    <source>
        <strain>cv. Columbia</strain>
    </source>
</reference>
<reference key="5">
    <citation type="journal article" date="2006" name="J. Exp. Bot.">
        <title>Purification, functional characterization, cloning, and identification of mutants of a seed-specific arabinan hydrolase in Arabidopsis.</title>
        <authorList>
            <person name="Minic Z."/>
            <person name="Do C.-T."/>
            <person name="Rihouey C."/>
            <person name="Morin H."/>
            <person name="Lerouge P."/>
            <person name="Jouanin L."/>
        </authorList>
    </citation>
    <scope>PROTEIN SEQUENCE OF 24-31</scope>
    <scope>FUNCTION</scope>
    <scope>CATALYTIC ACTIVITY</scope>
    <scope>BIOPHYSICOCHEMICAL PROPERTIES</scope>
    <scope>TISSUE SPECIFICITY</scope>
    <scope>DISRUPTION PHENOTYPE</scope>
</reference>
<reference key="6">
    <citation type="submission" date="2005-03" db="EMBL/GenBank/DDBJ databases">
        <title>Large-scale analysis of RIKEN Arabidopsis full-length (RAFL) cDNAs.</title>
        <authorList>
            <person name="Totoki Y."/>
            <person name="Seki M."/>
            <person name="Ishida J."/>
            <person name="Nakajima M."/>
            <person name="Enju A."/>
            <person name="Kamiya A."/>
            <person name="Narusaka M."/>
            <person name="Shin-i T."/>
            <person name="Nakagawa M."/>
            <person name="Sakamoto N."/>
            <person name="Oishi K."/>
            <person name="Kohara Y."/>
            <person name="Kobayashi M."/>
            <person name="Toyoda A."/>
            <person name="Sakaki Y."/>
            <person name="Sakurai T."/>
            <person name="Iida K."/>
            <person name="Akiyama K."/>
            <person name="Satou M."/>
            <person name="Toyoda T."/>
            <person name="Konagaya A."/>
            <person name="Carninci P."/>
            <person name="Kawai J."/>
            <person name="Hayashizaki Y."/>
            <person name="Shinozaki K."/>
        </authorList>
    </citation>
    <scope>NUCLEOTIDE SEQUENCE [LARGE SCALE MRNA] OF 487-773</scope>
    <source>
        <strain>cv. Columbia</strain>
    </source>
</reference>
<reference key="7">
    <citation type="journal article" date="2003" name="Plant J.">
        <title>AtBXL1, a novel higher plant (Arabidopsis thaliana) putative beta-xylosidase gene, is involved in secondary cell wall metabolism and plant development.</title>
        <authorList>
            <person name="Goujon T."/>
            <person name="Minic Z."/>
            <person name="El Amrani A."/>
            <person name="Lerouxel O."/>
            <person name="Aletti E."/>
            <person name="Lapierre C."/>
            <person name="Joseleau J.-P."/>
            <person name="Jouanin L."/>
        </authorList>
    </citation>
    <scope>IDENTIFICATION</scope>
</reference>
<dbReference type="EC" id="3.2.1.-"/>
<dbReference type="EC" id="3.2.1.55"/>
<dbReference type="EMBL" id="AB020752">
    <property type="protein sequence ID" value="BAB09531.1"/>
    <property type="molecule type" value="Genomic_DNA"/>
</dbReference>
<dbReference type="EMBL" id="AL353994">
    <property type="protein sequence ID" value="CAB89357.1"/>
    <property type="molecule type" value="Genomic_DNA"/>
</dbReference>
<dbReference type="EMBL" id="CP002688">
    <property type="protein sequence ID" value="AED91439.1"/>
    <property type="molecule type" value="Genomic_DNA"/>
</dbReference>
<dbReference type="EMBL" id="AY053409">
    <property type="protein sequence ID" value="AAK96639.1"/>
    <property type="molecule type" value="mRNA"/>
</dbReference>
<dbReference type="EMBL" id="AK221979">
    <property type="protein sequence ID" value="BAD94522.1"/>
    <property type="molecule type" value="mRNA"/>
</dbReference>
<dbReference type="PIR" id="T49925">
    <property type="entry name" value="T49925"/>
</dbReference>
<dbReference type="RefSeq" id="NP_196535.1">
    <property type="nucleotide sequence ID" value="NM_121010.3"/>
</dbReference>
<dbReference type="SMR" id="Q9LXD6"/>
<dbReference type="FunCoup" id="Q9LXD6">
    <property type="interactions" value="142"/>
</dbReference>
<dbReference type="STRING" id="3702.Q9LXD6"/>
<dbReference type="CAZy" id="GH3">
    <property type="family name" value="Glycoside Hydrolase Family 3"/>
</dbReference>
<dbReference type="GlyCosmos" id="Q9LXD6">
    <property type="glycosylation" value="4 sites, No reported glycans"/>
</dbReference>
<dbReference type="GlyGen" id="Q9LXD6">
    <property type="glycosylation" value="4 sites"/>
</dbReference>
<dbReference type="PaxDb" id="3702-AT5G09730.1"/>
<dbReference type="ProteomicsDB" id="239129"/>
<dbReference type="EnsemblPlants" id="AT5G09730.1">
    <property type="protein sequence ID" value="AT5G09730.1"/>
    <property type="gene ID" value="AT5G09730"/>
</dbReference>
<dbReference type="GeneID" id="830833"/>
<dbReference type="Gramene" id="AT5G09730.1">
    <property type="protein sequence ID" value="AT5G09730.1"/>
    <property type="gene ID" value="AT5G09730"/>
</dbReference>
<dbReference type="KEGG" id="ath:AT5G09730"/>
<dbReference type="Araport" id="AT5G09730"/>
<dbReference type="TAIR" id="AT5G09730">
    <property type="gene designation" value="BXL3"/>
</dbReference>
<dbReference type="eggNOG" id="ENOG502QQ55">
    <property type="taxonomic scope" value="Eukaryota"/>
</dbReference>
<dbReference type="HOGENOM" id="CLU_004542_5_3_1"/>
<dbReference type="InParanoid" id="Q9LXD6"/>
<dbReference type="OMA" id="INICRSP"/>
<dbReference type="PhylomeDB" id="Q9LXD6"/>
<dbReference type="BioCyc" id="ARA:AT5G09730-MONOMER"/>
<dbReference type="PRO" id="PR:Q9LXD6"/>
<dbReference type="Proteomes" id="UP000006548">
    <property type="component" value="Chromosome 5"/>
</dbReference>
<dbReference type="ExpressionAtlas" id="Q9LXD6">
    <property type="expression patterns" value="baseline and differential"/>
</dbReference>
<dbReference type="GO" id="GO:0005576">
    <property type="term" value="C:extracellular region"/>
    <property type="evidence" value="ECO:0007669"/>
    <property type="project" value="UniProtKB-KW"/>
</dbReference>
<dbReference type="GO" id="GO:0046556">
    <property type="term" value="F:alpha-L-arabinofuranosidase activity"/>
    <property type="evidence" value="ECO:0000314"/>
    <property type="project" value="TAIR"/>
</dbReference>
<dbReference type="GO" id="GO:0009044">
    <property type="term" value="F:xylan 1,4-beta-xylosidase activity"/>
    <property type="evidence" value="ECO:0007669"/>
    <property type="project" value="InterPro"/>
</dbReference>
<dbReference type="GO" id="GO:0031222">
    <property type="term" value="P:arabinan catabolic process"/>
    <property type="evidence" value="ECO:0000314"/>
    <property type="project" value="TAIR"/>
</dbReference>
<dbReference type="GO" id="GO:0045493">
    <property type="term" value="P:xylan catabolic process"/>
    <property type="evidence" value="ECO:0007669"/>
    <property type="project" value="InterPro"/>
</dbReference>
<dbReference type="FunFam" id="2.60.40.10:FF:001384">
    <property type="entry name" value="Beta-D-xylosidase 4"/>
    <property type="match status" value="1"/>
</dbReference>
<dbReference type="FunFam" id="3.40.50.1700:FF:000001">
    <property type="entry name" value="probable beta-D-xylosidase 2"/>
    <property type="match status" value="1"/>
</dbReference>
<dbReference type="FunFam" id="3.20.20.300:FF:000004">
    <property type="entry name" value="probable beta-D-xylosidase 7"/>
    <property type="match status" value="1"/>
</dbReference>
<dbReference type="Gene3D" id="3.40.50.1700">
    <property type="entry name" value="Glycoside hydrolase family 3 C-terminal domain"/>
    <property type="match status" value="1"/>
</dbReference>
<dbReference type="Gene3D" id="3.20.20.300">
    <property type="entry name" value="Glycoside hydrolase, family 3, N-terminal domain"/>
    <property type="match status" value="1"/>
</dbReference>
<dbReference type="Gene3D" id="2.60.40.10">
    <property type="entry name" value="Immunoglobulins"/>
    <property type="match status" value="1"/>
</dbReference>
<dbReference type="InterPro" id="IPR044993">
    <property type="entry name" value="BXL"/>
</dbReference>
<dbReference type="InterPro" id="IPR026891">
    <property type="entry name" value="Fn3-like"/>
</dbReference>
<dbReference type="InterPro" id="IPR002772">
    <property type="entry name" value="Glyco_hydro_3_C"/>
</dbReference>
<dbReference type="InterPro" id="IPR036881">
    <property type="entry name" value="Glyco_hydro_3_C_sf"/>
</dbReference>
<dbReference type="InterPro" id="IPR001764">
    <property type="entry name" value="Glyco_hydro_3_N"/>
</dbReference>
<dbReference type="InterPro" id="IPR036962">
    <property type="entry name" value="Glyco_hydro_3_N_sf"/>
</dbReference>
<dbReference type="InterPro" id="IPR017853">
    <property type="entry name" value="Glycoside_hydrolase_SF"/>
</dbReference>
<dbReference type="InterPro" id="IPR013783">
    <property type="entry name" value="Ig-like_fold"/>
</dbReference>
<dbReference type="PANTHER" id="PTHR42721:SF20">
    <property type="entry name" value="BETA-D-XYLOSIDASE 3"/>
    <property type="match status" value="1"/>
</dbReference>
<dbReference type="PANTHER" id="PTHR42721">
    <property type="entry name" value="SUGAR HYDROLASE-RELATED"/>
    <property type="match status" value="1"/>
</dbReference>
<dbReference type="Pfam" id="PF14310">
    <property type="entry name" value="Fn3-like"/>
    <property type="match status" value="1"/>
</dbReference>
<dbReference type="Pfam" id="PF00933">
    <property type="entry name" value="Glyco_hydro_3"/>
    <property type="match status" value="1"/>
</dbReference>
<dbReference type="Pfam" id="PF01915">
    <property type="entry name" value="Glyco_hydro_3_C"/>
    <property type="match status" value="1"/>
</dbReference>
<dbReference type="PRINTS" id="PR00133">
    <property type="entry name" value="GLHYDRLASE3"/>
</dbReference>
<dbReference type="SMART" id="SM01217">
    <property type="entry name" value="Fn3_like"/>
    <property type="match status" value="1"/>
</dbReference>
<dbReference type="SUPFAM" id="SSF51445">
    <property type="entry name" value="(Trans)glycosidases"/>
    <property type="match status" value="1"/>
</dbReference>
<dbReference type="SUPFAM" id="SSF52279">
    <property type="entry name" value="Beta-D-glucan exohydrolase, C-terminal domain"/>
    <property type="match status" value="1"/>
</dbReference>
<organism>
    <name type="scientific">Arabidopsis thaliana</name>
    <name type="common">Mouse-ear cress</name>
    <dbReference type="NCBI Taxonomy" id="3702"/>
    <lineage>
        <taxon>Eukaryota</taxon>
        <taxon>Viridiplantae</taxon>
        <taxon>Streptophyta</taxon>
        <taxon>Embryophyta</taxon>
        <taxon>Tracheophyta</taxon>
        <taxon>Spermatophyta</taxon>
        <taxon>Magnoliopsida</taxon>
        <taxon>eudicotyledons</taxon>
        <taxon>Gunneridae</taxon>
        <taxon>Pentapetalae</taxon>
        <taxon>rosids</taxon>
        <taxon>malvids</taxon>
        <taxon>Brassicales</taxon>
        <taxon>Brassicaceae</taxon>
        <taxon>Camelineae</taxon>
        <taxon>Arabidopsis</taxon>
    </lineage>
</organism>